<protein>
    <recommendedName>
        <fullName evidence="1">Beta-galactosidase</fullName>
        <shortName evidence="1">Beta-gal</shortName>
        <ecNumber evidence="1">3.2.1.23</ecNumber>
    </recommendedName>
    <alternativeName>
        <fullName evidence="1">Lactase</fullName>
    </alternativeName>
</protein>
<comment type="catalytic activity">
    <reaction evidence="1">
        <text>Hydrolysis of terminal non-reducing beta-D-galactose residues in beta-D-galactosides.</text>
        <dbReference type="EC" id="3.2.1.23"/>
    </reaction>
</comment>
<comment type="cofactor">
    <cofactor evidence="1">
        <name>Mg(2+)</name>
        <dbReference type="ChEBI" id="CHEBI:18420"/>
    </cofactor>
    <text evidence="1">Binds 2 magnesium ions per monomer.</text>
</comment>
<comment type="cofactor">
    <cofactor evidence="1">
        <name>Na(+)</name>
        <dbReference type="ChEBI" id="CHEBI:29101"/>
    </cofactor>
    <text evidence="1">Binds 1 sodium ion per monomer.</text>
</comment>
<comment type="subunit">
    <text evidence="1">Homotetramer.</text>
</comment>
<comment type="similarity">
    <text evidence="1">Belongs to the glycosyl hydrolase 2 family.</text>
</comment>
<keyword id="KW-0326">Glycosidase</keyword>
<keyword id="KW-0378">Hydrolase</keyword>
<keyword id="KW-0460">Magnesium</keyword>
<keyword id="KW-0479">Metal-binding</keyword>
<keyword id="KW-1185">Reference proteome</keyword>
<keyword id="KW-0915">Sodium</keyword>
<name>BGAL_OENOB</name>
<dbReference type="EC" id="3.2.1.23" evidence="1"/>
<dbReference type="EMBL" id="CP000411">
    <property type="protein sequence ID" value="ABJ56948.1"/>
    <property type="molecule type" value="Genomic_DNA"/>
</dbReference>
<dbReference type="RefSeq" id="WP_002821094.1">
    <property type="nucleotide sequence ID" value="NC_008528.1"/>
</dbReference>
<dbReference type="SMR" id="Q04F24"/>
<dbReference type="STRING" id="203123.OEOE_1044"/>
<dbReference type="CAZy" id="GH2">
    <property type="family name" value="Glycoside Hydrolase Family 2"/>
</dbReference>
<dbReference type="KEGG" id="ooe:OEOE_1044"/>
<dbReference type="PATRIC" id="fig|203123.7.peg.1059"/>
<dbReference type="eggNOG" id="COG3250">
    <property type="taxonomic scope" value="Bacteria"/>
</dbReference>
<dbReference type="HOGENOM" id="CLU_002346_0_2_9"/>
<dbReference type="Proteomes" id="UP000000774">
    <property type="component" value="Chromosome"/>
</dbReference>
<dbReference type="GO" id="GO:0009341">
    <property type="term" value="C:beta-galactosidase complex"/>
    <property type="evidence" value="ECO:0007669"/>
    <property type="project" value="InterPro"/>
</dbReference>
<dbReference type="GO" id="GO:0004565">
    <property type="term" value="F:beta-galactosidase activity"/>
    <property type="evidence" value="ECO:0007669"/>
    <property type="project" value="UniProtKB-EC"/>
</dbReference>
<dbReference type="GO" id="GO:0030246">
    <property type="term" value="F:carbohydrate binding"/>
    <property type="evidence" value="ECO:0007669"/>
    <property type="project" value="InterPro"/>
</dbReference>
<dbReference type="GO" id="GO:0000287">
    <property type="term" value="F:magnesium ion binding"/>
    <property type="evidence" value="ECO:0007669"/>
    <property type="project" value="UniProtKB-UniRule"/>
</dbReference>
<dbReference type="GO" id="GO:0005990">
    <property type="term" value="P:lactose catabolic process"/>
    <property type="evidence" value="ECO:0007669"/>
    <property type="project" value="TreeGrafter"/>
</dbReference>
<dbReference type="FunFam" id="3.20.20.80:FF:000018">
    <property type="entry name" value="Beta-galactosidase"/>
    <property type="match status" value="1"/>
</dbReference>
<dbReference type="Gene3D" id="2.70.98.10">
    <property type="match status" value="1"/>
</dbReference>
<dbReference type="Gene3D" id="2.60.120.260">
    <property type="entry name" value="Galactose-binding domain-like"/>
    <property type="match status" value="1"/>
</dbReference>
<dbReference type="Gene3D" id="3.20.20.80">
    <property type="entry name" value="Glycosidases"/>
    <property type="match status" value="1"/>
</dbReference>
<dbReference type="Gene3D" id="2.60.40.10">
    <property type="entry name" value="Immunoglobulins"/>
    <property type="match status" value="2"/>
</dbReference>
<dbReference type="HAMAP" id="MF_01687">
    <property type="entry name" value="Beta_gal"/>
    <property type="match status" value="1"/>
</dbReference>
<dbReference type="InterPro" id="IPR004199">
    <property type="entry name" value="B-gal_small/dom_5"/>
</dbReference>
<dbReference type="InterPro" id="IPR050347">
    <property type="entry name" value="Bact_Beta-galactosidase"/>
</dbReference>
<dbReference type="InterPro" id="IPR036156">
    <property type="entry name" value="Beta-gal/glucu_dom_sf"/>
</dbReference>
<dbReference type="InterPro" id="IPR011013">
    <property type="entry name" value="Gal_mutarotase_sf_dom"/>
</dbReference>
<dbReference type="InterPro" id="IPR008979">
    <property type="entry name" value="Galactose-bd-like_sf"/>
</dbReference>
<dbReference type="InterPro" id="IPR014718">
    <property type="entry name" value="GH-type_carb-bd"/>
</dbReference>
<dbReference type="InterPro" id="IPR006101">
    <property type="entry name" value="Glyco_hydro_2"/>
</dbReference>
<dbReference type="InterPro" id="IPR023232">
    <property type="entry name" value="Glyco_hydro_2_AS"/>
</dbReference>
<dbReference type="InterPro" id="IPR023933">
    <property type="entry name" value="Glyco_hydro_2_beta_Galsidase"/>
</dbReference>
<dbReference type="InterPro" id="IPR006103">
    <property type="entry name" value="Glyco_hydro_2_cat"/>
</dbReference>
<dbReference type="InterPro" id="IPR023230">
    <property type="entry name" value="Glyco_hydro_2_CS"/>
</dbReference>
<dbReference type="InterPro" id="IPR006102">
    <property type="entry name" value="Glyco_hydro_2_Ig-like"/>
</dbReference>
<dbReference type="InterPro" id="IPR006104">
    <property type="entry name" value="Glyco_hydro_2_N"/>
</dbReference>
<dbReference type="InterPro" id="IPR017853">
    <property type="entry name" value="Glycoside_hydrolase_SF"/>
</dbReference>
<dbReference type="InterPro" id="IPR013783">
    <property type="entry name" value="Ig-like_fold"/>
</dbReference>
<dbReference type="InterPro" id="IPR032312">
    <property type="entry name" value="LacZ_4"/>
</dbReference>
<dbReference type="NCBIfam" id="NF007074">
    <property type="entry name" value="PRK09525.1"/>
    <property type="match status" value="1"/>
</dbReference>
<dbReference type="PANTHER" id="PTHR46323">
    <property type="entry name" value="BETA-GALACTOSIDASE"/>
    <property type="match status" value="1"/>
</dbReference>
<dbReference type="PANTHER" id="PTHR46323:SF2">
    <property type="entry name" value="BETA-GALACTOSIDASE"/>
    <property type="match status" value="1"/>
</dbReference>
<dbReference type="Pfam" id="PF02929">
    <property type="entry name" value="Bgal_small_N"/>
    <property type="match status" value="1"/>
</dbReference>
<dbReference type="Pfam" id="PF00703">
    <property type="entry name" value="Glyco_hydro_2"/>
    <property type="match status" value="1"/>
</dbReference>
<dbReference type="Pfam" id="PF02836">
    <property type="entry name" value="Glyco_hydro_2_C"/>
    <property type="match status" value="1"/>
</dbReference>
<dbReference type="Pfam" id="PF02837">
    <property type="entry name" value="Glyco_hydro_2_N"/>
    <property type="match status" value="1"/>
</dbReference>
<dbReference type="Pfam" id="PF16353">
    <property type="entry name" value="LacZ_4"/>
    <property type="match status" value="1"/>
</dbReference>
<dbReference type="PRINTS" id="PR00132">
    <property type="entry name" value="GLHYDRLASE2"/>
</dbReference>
<dbReference type="SMART" id="SM01038">
    <property type="entry name" value="Bgal_small_N"/>
    <property type="match status" value="1"/>
</dbReference>
<dbReference type="SUPFAM" id="SSF51445">
    <property type="entry name" value="(Trans)glycosidases"/>
    <property type="match status" value="1"/>
</dbReference>
<dbReference type="SUPFAM" id="SSF49303">
    <property type="entry name" value="beta-Galactosidase/glucuronidase domain"/>
    <property type="match status" value="2"/>
</dbReference>
<dbReference type="SUPFAM" id="SSF74650">
    <property type="entry name" value="Galactose mutarotase-like"/>
    <property type="match status" value="1"/>
</dbReference>
<dbReference type="SUPFAM" id="SSF49785">
    <property type="entry name" value="Galactose-binding domain-like"/>
    <property type="match status" value="1"/>
</dbReference>
<dbReference type="PROSITE" id="PS00719">
    <property type="entry name" value="GLYCOSYL_HYDROL_F2_1"/>
    <property type="match status" value="1"/>
</dbReference>
<dbReference type="PROSITE" id="PS00608">
    <property type="entry name" value="GLYCOSYL_HYDROL_F2_2"/>
    <property type="match status" value="1"/>
</dbReference>
<proteinExistence type="inferred from homology"/>
<accession>Q04F24</accession>
<feature type="chain" id="PRO_0000367004" description="Beta-galactosidase">
    <location>
        <begin position="1"/>
        <end position="1031"/>
    </location>
</feature>
<feature type="active site" description="Proton donor" evidence="1">
    <location>
        <position position="457"/>
    </location>
</feature>
<feature type="active site" description="Nucleophile" evidence="1">
    <location>
        <position position="533"/>
    </location>
</feature>
<feature type="binding site" evidence="1">
    <location>
        <position position="98"/>
    </location>
    <ligand>
        <name>substrate</name>
    </ligand>
</feature>
<feature type="binding site" evidence="1">
    <location>
        <position position="197"/>
    </location>
    <ligand>
        <name>Na(+)</name>
        <dbReference type="ChEBI" id="CHEBI:29101"/>
    </ligand>
</feature>
<feature type="binding site" evidence="1">
    <location>
        <position position="197"/>
    </location>
    <ligand>
        <name>substrate</name>
    </ligand>
</feature>
<feature type="binding site" evidence="1">
    <location>
        <position position="412"/>
    </location>
    <ligand>
        <name>Mg(2+)</name>
        <dbReference type="ChEBI" id="CHEBI:18420"/>
        <label>1</label>
    </ligand>
</feature>
<feature type="binding site" evidence="1">
    <location>
        <position position="414"/>
    </location>
    <ligand>
        <name>Mg(2+)</name>
        <dbReference type="ChEBI" id="CHEBI:18420"/>
        <label>1</label>
    </ligand>
</feature>
<feature type="binding site" evidence="1">
    <location>
        <position position="457"/>
    </location>
    <ligand>
        <name>Mg(2+)</name>
        <dbReference type="ChEBI" id="CHEBI:18420"/>
        <label>1</label>
    </ligand>
</feature>
<feature type="binding site" evidence="1">
    <location>
        <position position="457"/>
    </location>
    <ligand>
        <name>substrate</name>
    </ligand>
</feature>
<feature type="binding site" evidence="1">
    <location>
        <begin position="533"/>
        <end position="536"/>
    </location>
    <ligand>
        <name>substrate</name>
    </ligand>
</feature>
<feature type="binding site" evidence="1">
    <location>
        <position position="593"/>
    </location>
    <ligand>
        <name>Mg(2+)</name>
        <dbReference type="ChEBI" id="CHEBI:18420"/>
        <label>2</label>
    </ligand>
</feature>
<feature type="binding site" evidence="1">
    <location>
        <position position="597"/>
    </location>
    <ligand>
        <name>Na(+)</name>
        <dbReference type="ChEBI" id="CHEBI:29101"/>
    </ligand>
</feature>
<feature type="binding site" evidence="1">
    <location>
        <position position="600"/>
    </location>
    <ligand>
        <name>Na(+)</name>
        <dbReference type="ChEBI" id="CHEBI:29101"/>
    </ligand>
</feature>
<feature type="binding site" evidence="1">
    <location>
        <position position="600"/>
    </location>
    <ligand>
        <name>substrate</name>
    </ligand>
</feature>
<feature type="binding site" evidence="1">
    <location>
        <position position="1005"/>
    </location>
    <ligand>
        <name>substrate</name>
    </ligand>
</feature>
<feature type="site" description="Transition state stabilizer" evidence="1">
    <location>
        <position position="353"/>
    </location>
</feature>
<feature type="site" description="Transition state stabilizer" evidence="1">
    <location>
        <position position="387"/>
    </location>
</feature>
<reference key="1">
    <citation type="journal article" date="2006" name="Proc. Natl. Acad. Sci. U.S.A.">
        <title>Comparative genomics of the lactic acid bacteria.</title>
        <authorList>
            <person name="Makarova K.S."/>
            <person name="Slesarev A."/>
            <person name="Wolf Y.I."/>
            <person name="Sorokin A."/>
            <person name="Mirkin B."/>
            <person name="Koonin E.V."/>
            <person name="Pavlov A."/>
            <person name="Pavlova N."/>
            <person name="Karamychev V."/>
            <person name="Polouchine N."/>
            <person name="Shakhova V."/>
            <person name="Grigoriev I."/>
            <person name="Lou Y."/>
            <person name="Rohksar D."/>
            <person name="Lucas S."/>
            <person name="Huang K."/>
            <person name="Goodstein D.M."/>
            <person name="Hawkins T."/>
            <person name="Plengvidhya V."/>
            <person name="Welker D."/>
            <person name="Hughes J."/>
            <person name="Goh Y."/>
            <person name="Benson A."/>
            <person name="Baldwin K."/>
            <person name="Lee J.-H."/>
            <person name="Diaz-Muniz I."/>
            <person name="Dosti B."/>
            <person name="Smeianov V."/>
            <person name="Wechter W."/>
            <person name="Barabote R."/>
            <person name="Lorca G."/>
            <person name="Altermann E."/>
            <person name="Barrangou R."/>
            <person name="Ganesan B."/>
            <person name="Xie Y."/>
            <person name="Rawsthorne H."/>
            <person name="Tamir D."/>
            <person name="Parker C."/>
            <person name="Breidt F."/>
            <person name="Broadbent J.R."/>
            <person name="Hutkins R."/>
            <person name="O'Sullivan D."/>
            <person name="Steele J."/>
            <person name="Unlu G."/>
            <person name="Saier M.H. Jr."/>
            <person name="Klaenhammer T."/>
            <person name="Richardson P."/>
            <person name="Kozyavkin S."/>
            <person name="Weimer B.C."/>
            <person name="Mills D.A."/>
        </authorList>
    </citation>
    <scope>NUCLEOTIDE SEQUENCE [LARGE SCALE GENOMIC DNA]</scope>
    <source>
        <strain>ATCC BAA-331 / PSU-1</strain>
    </source>
</reference>
<gene>
    <name evidence="1" type="primary">lacZ</name>
    <name type="ordered locus">OEOE_1044</name>
</gene>
<organism>
    <name type="scientific">Oenococcus oeni (strain ATCC BAA-331 / PSU-1)</name>
    <dbReference type="NCBI Taxonomy" id="203123"/>
    <lineage>
        <taxon>Bacteria</taxon>
        <taxon>Bacillati</taxon>
        <taxon>Bacillota</taxon>
        <taxon>Bacilli</taxon>
        <taxon>Lactobacillales</taxon>
        <taxon>Lactobacillaceae</taxon>
        <taxon>Oenococcus</taxon>
    </lineage>
</organism>
<sequence>MTNKISFRDIINRKDWENPVITNWHRLPIHTEMNYSKSLNEDKQKTIQSLNGNWCFSYFSKVTDVPENWADRDLTKSNIMPVPSNWQLHGYDQPIYSNVAYPFPANPPYLPEENPTACYSRIFQLNDDWLQSGQNHVIFNGVGSAFHLWLNGQWIGYSEDSRLPAEFDLTKYLKSGKNRISVMVLRWSKGSYFEDQDMWRMSGIFRDVEVKHLPATYLQDYQLQTDLDDDLDQAKITIKAQVAGKNFSQNKLRTRLYFANEKVADQSSRLSTRAVDERGPLDNQFIAELNLKDPYLWSAELPYLYQLVIELLTDDGDILQVEKVNIGVRKVEIKNGLLKLNGKPLLIRGTNKHEFDSKKGYAVDEETMIQDIKAMKRNNFNAVRCSHYPNNRRWYELCDQYGLYVVDEANIETHGMVPMNRLTNDPVYLPLMSDRVTRMVTRDRNHPSIIIWSLGNESGYGRNHAALYNWIKQSDLSRPVQYEGGGANTAVTDIIVPMYARVEQDQIESVNSKWSLKKWIGLPGETRPLILCEYAHDMGNSLGGFGKYWQAFHKYPRLQGGFIWDWVDQGLLKKDVNGNDFYAYGGDFKDQPNDRQFCLDGLLFPDRTPKPAMHEVKYWQQYYLFNLQRNPLGQAESFTVTNDYSFKKSSNERLHYQIKSENEIVIDKYIDLVLNPGESLLIKLPKGRSSTSSLLDIDISLIKGNSWAPSGFKIASEQYVLAKKFGPTNAVTAATNKISLIENKDTNTFEIKLDDQKWQFAKNSGLLVSWSKSGNENLLDALRDQFTRAPLDNDIGVSKVDHIDPNAWYERWKSAGMYNLKTNLVSIDAEQLERAVLIRTEHSYSNHFQILFKSSKIYRIDANGTMTVTVDVSLAQGIPFPARIGLTCHLADQITDVSYTGLGPFENYPDRQSAAQYGHWQMELDDLYTPYIFPSENGSRGQVSQLEFGKQKISAYHEQNFSFNLSRFSKQQLARISHRNLLQAENGVWLSIDGYRMGVGGDDSWSPSVAPEYLLSNNYYHYAFQWCRKDI</sequence>
<evidence type="ECO:0000255" key="1">
    <source>
        <dbReference type="HAMAP-Rule" id="MF_01687"/>
    </source>
</evidence>